<evidence type="ECO:0000250" key="1"/>
<evidence type="ECO:0000269" key="2">
    <source>
    </source>
</evidence>
<evidence type="ECO:0000305" key="3"/>
<evidence type="ECO:0000305" key="4">
    <source>
    </source>
</evidence>
<accession>P0C911</accession>
<comment type="function">
    <text evidence="1">Alpha toxins bind voltage-independently at site-3 of sodium channels (Nav) and inhibit the inactivation of the activated channels, thereby blocking neuronal transmission.</text>
</comment>
<comment type="subcellular location">
    <subcellularLocation>
        <location evidence="2">Secreted</location>
    </subcellularLocation>
</comment>
<comment type="tissue specificity">
    <text evidence="4">Expressed by the venom gland.</text>
</comment>
<comment type="domain">
    <text evidence="3">Has the structural arrangement of an alpha-helix connected to antiparallel beta-sheets by disulfide bonds (CS-alpha/beta).</text>
</comment>
<comment type="similarity">
    <text evidence="3">Belongs to the long (4 C-C) scorpion toxin superfamily. Sodium channel inhibitor family. Alpha subfamily.</text>
</comment>
<feature type="chain" id="PRO_0000368019" description="Alpha-toxin">
    <location>
        <begin position="1"/>
        <end position="16" status="greater than"/>
    </location>
</feature>
<feature type="non-terminal residue">
    <location>
        <position position="16"/>
    </location>
</feature>
<name>SCX_ANDMA</name>
<reference key="1">
    <citation type="journal article" date="2008" name="Toxicon">
        <title>New analysis of the toxic compounds from the Androctonus mauretanicus mauretanicus scorpion venom.</title>
        <authorList>
            <person name="Oukkache N."/>
            <person name="Rosso J.-P."/>
            <person name="Alami M."/>
            <person name="Ghalim N."/>
            <person name="Saile R."/>
            <person name="Hassar M."/>
            <person name="Bougis P.E."/>
            <person name="Martin-Eauclaire M.-F."/>
        </authorList>
    </citation>
    <scope>PROTEIN SEQUENCE</scope>
    <scope>SUBCELLULAR LOCATION</scope>
    <source>
        <tissue>Venom</tissue>
    </source>
</reference>
<organism>
    <name type="scientific">Androctonus mauritanicus mauritanicus</name>
    <name type="common">Scorpion</name>
    <dbReference type="NCBI Taxonomy" id="6860"/>
    <lineage>
        <taxon>Eukaryota</taxon>
        <taxon>Metazoa</taxon>
        <taxon>Ecdysozoa</taxon>
        <taxon>Arthropoda</taxon>
        <taxon>Chelicerata</taxon>
        <taxon>Arachnida</taxon>
        <taxon>Scorpiones</taxon>
        <taxon>Buthida</taxon>
        <taxon>Buthoidea</taxon>
        <taxon>Buthidae</taxon>
        <taxon>Androctonus</taxon>
    </lineage>
</organism>
<proteinExistence type="evidence at protein level"/>
<sequence>GRDGYIAQPENXVYXX</sequence>
<keyword id="KW-0903">Direct protein sequencing</keyword>
<keyword id="KW-0872">Ion channel impairing toxin</keyword>
<keyword id="KW-0528">Neurotoxin</keyword>
<keyword id="KW-0964">Secreted</keyword>
<keyword id="KW-0800">Toxin</keyword>
<keyword id="KW-0738">Voltage-gated sodium channel impairing toxin</keyword>
<protein>
    <recommendedName>
        <fullName>Alpha-toxin</fullName>
    </recommendedName>
</protein>
<dbReference type="GO" id="GO:0005576">
    <property type="term" value="C:extracellular region"/>
    <property type="evidence" value="ECO:0007669"/>
    <property type="project" value="UniProtKB-SubCell"/>
</dbReference>
<dbReference type="GO" id="GO:0017080">
    <property type="term" value="F:sodium channel regulator activity"/>
    <property type="evidence" value="ECO:0007669"/>
    <property type="project" value="UniProtKB-KW"/>
</dbReference>
<dbReference type="GO" id="GO:0090729">
    <property type="term" value="F:toxin activity"/>
    <property type="evidence" value="ECO:0007669"/>
    <property type="project" value="UniProtKB-KW"/>
</dbReference>